<sequence>MQPFKTIGLIGRLGSPNAVETLKRLLRFLGTRELDVIVDERTATVLLNHGYPEASRSRLGELCDLVIVVGGDGSLLSAARVLCQTQTPVLGVNRGRLGFLTDISPDDVEERIGEVLDGHFESEQRFLLEAEVFRAGKQVGTASGLNDVVIHPGKAARMIEFELFIDGQFVYSQRSDGLIIATPTGSTAYALSGGGPIVHPRLEAITLVPMFPHTLSSRPIVVDAASEVTIHIGETNQAYPHVSCDGQTQVVSKPGDIMVVRRKRERLTLIHPRGHNYFETCRTKLGWSSRLGE</sequence>
<comment type="function">
    <text evidence="1">Involved in the regulation of the intracellular balance of NAD and NADP, and is a key enzyme in the biosynthesis of NADP. Catalyzes specifically the phosphorylation on 2'-hydroxyl of the adenosine moiety of NAD to yield NADP.</text>
</comment>
<comment type="catalytic activity">
    <reaction evidence="1">
        <text>NAD(+) + ATP = ADP + NADP(+) + H(+)</text>
        <dbReference type="Rhea" id="RHEA:18629"/>
        <dbReference type="ChEBI" id="CHEBI:15378"/>
        <dbReference type="ChEBI" id="CHEBI:30616"/>
        <dbReference type="ChEBI" id="CHEBI:57540"/>
        <dbReference type="ChEBI" id="CHEBI:58349"/>
        <dbReference type="ChEBI" id="CHEBI:456216"/>
        <dbReference type="EC" id="2.7.1.23"/>
    </reaction>
</comment>
<comment type="cofactor">
    <cofactor evidence="1">
        <name>a divalent metal cation</name>
        <dbReference type="ChEBI" id="CHEBI:60240"/>
    </cofactor>
</comment>
<comment type="subcellular location">
    <subcellularLocation>
        <location evidence="1">Cytoplasm</location>
    </subcellularLocation>
</comment>
<comment type="similarity">
    <text evidence="1">Belongs to the NAD kinase family.</text>
</comment>
<feature type="chain" id="PRO_1000005402" description="NAD kinase">
    <location>
        <begin position="1"/>
        <end position="293"/>
    </location>
</feature>
<feature type="active site" description="Proton acceptor" evidence="1">
    <location>
        <position position="72"/>
    </location>
</feature>
<feature type="binding site" evidence="1">
    <location>
        <begin position="72"/>
        <end position="73"/>
    </location>
    <ligand>
        <name>NAD(+)</name>
        <dbReference type="ChEBI" id="CHEBI:57540"/>
    </ligand>
</feature>
<feature type="binding site" evidence="1">
    <location>
        <begin position="146"/>
        <end position="147"/>
    </location>
    <ligand>
        <name>NAD(+)</name>
        <dbReference type="ChEBI" id="CHEBI:57540"/>
    </ligand>
</feature>
<feature type="binding site" evidence="1">
    <location>
        <position position="157"/>
    </location>
    <ligand>
        <name>NAD(+)</name>
        <dbReference type="ChEBI" id="CHEBI:57540"/>
    </ligand>
</feature>
<feature type="binding site" evidence="1">
    <location>
        <position position="174"/>
    </location>
    <ligand>
        <name>NAD(+)</name>
        <dbReference type="ChEBI" id="CHEBI:57540"/>
    </ligand>
</feature>
<feature type="binding site" evidence="1">
    <location>
        <position position="176"/>
    </location>
    <ligand>
        <name>NAD(+)</name>
        <dbReference type="ChEBI" id="CHEBI:57540"/>
    </ligand>
</feature>
<feature type="binding site" evidence="1">
    <location>
        <begin position="187"/>
        <end position="192"/>
    </location>
    <ligand>
        <name>NAD(+)</name>
        <dbReference type="ChEBI" id="CHEBI:57540"/>
    </ligand>
</feature>
<feature type="binding site" evidence="1">
    <location>
        <position position="247"/>
    </location>
    <ligand>
        <name>NAD(+)</name>
        <dbReference type="ChEBI" id="CHEBI:57540"/>
    </ligand>
</feature>
<reference key="1">
    <citation type="journal article" date="2011" name="Stand. Genomic Sci.">
        <title>Complete genome sequence of the halophilic and highly halotolerant Chromohalobacter salexigens type strain (1H11(T)).</title>
        <authorList>
            <person name="Copeland A."/>
            <person name="O'Connor K."/>
            <person name="Lucas S."/>
            <person name="Lapidus A."/>
            <person name="Berry K.W."/>
            <person name="Detter J.C."/>
            <person name="Del Rio T.G."/>
            <person name="Hammon N."/>
            <person name="Dalin E."/>
            <person name="Tice H."/>
            <person name="Pitluck S."/>
            <person name="Bruce D."/>
            <person name="Goodwin L."/>
            <person name="Han C."/>
            <person name="Tapia R."/>
            <person name="Saunders E."/>
            <person name="Schmutz J."/>
            <person name="Brettin T."/>
            <person name="Larimer F."/>
            <person name="Land M."/>
            <person name="Hauser L."/>
            <person name="Vargas C."/>
            <person name="Nieto J.J."/>
            <person name="Kyrpides N.C."/>
            <person name="Ivanova N."/>
            <person name="Goker M."/>
            <person name="Klenk H.P."/>
            <person name="Csonka L.N."/>
            <person name="Woyke T."/>
        </authorList>
    </citation>
    <scope>NUCLEOTIDE SEQUENCE [LARGE SCALE GENOMIC DNA]</scope>
    <source>
        <strain>ATCC BAA-138 / DSM 3043 / CIP 106854 / NCIMB 13768 / 1H11</strain>
    </source>
</reference>
<dbReference type="EC" id="2.7.1.23" evidence="1"/>
<dbReference type="EMBL" id="CP000285">
    <property type="protein sequence ID" value="ABE58662.1"/>
    <property type="molecule type" value="Genomic_DNA"/>
</dbReference>
<dbReference type="RefSeq" id="WP_011506608.1">
    <property type="nucleotide sequence ID" value="NC_007963.1"/>
</dbReference>
<dbReference type="SMR" id="Q1QXZ6"/>
<dbReference type="STRING" id="290398.Csal_1307"/>
<dbReference type="GeneID" id="95334045"/>
<dbReference type="KEGG" id="csa:Csal_1307"/>
<dbReference type="eggNOG" id="COG0061">
    <property type="taxonomic scope" value="Bacteria"/>
</dbReference>
<dbReference type="HOGENOM" id="CLU_008831_0_1_6"/>
<dbReference type="OrthoDB" id="9774737at2"/>
<dbReference type="Proteomes" id="UP000000239">
    <property type="component" value="Chromosome"/>
</dbReference>
<dbReference type="GO" id="GO:0005737">
    <property type="term" value="C:cytoplasm"/>
    <property type="evidence" value="ECO:0007669"/>
    <property type="project" value="UniProtKB-SubCell"/>
</dbReference>
<dbReference type="GO" id="GO:0005524">
    <property type="term" value="F:ATP binding"/>
    <property type="evidence" value="ECO:0007669"/>
    <property type="project" value="UniProtKB-KW"/>
</dbReference>
<dbReference type="GO" id="GO:0046872">
    <property type="term" value="F:metal ion binding"/>
    <property type="evidence" value="ECO:0007669"/>
    <property type="project" value="UniProtKB-UniRule"/>
</dbReference>
<dbReference type="GO" id="GO:0051287">
    <property type="term" value="F:NAD binding"/>
    <property type="evidence" value="ECO:0007669"/>
    <property type="project" value="UniProtKB-ARBA"/>
</dbReference>
<dbReference type="GO" id="GO:0003951">
    <property type="term" value="F:NAD+ kinase activity"/>
    <property type="evidence" value="ECO:0007669"/>
    <property type="project" value="UniProtKB-UniRule"/>
</dbReference>
<dbReference type="GO" id="GO:0019674">
    <property type="term" value="P:NAD metabolic process"/>
    <property type="evidence" value="ECO:0007669"/>
    <property type="project" value="InterPro"/>
</dbReference>
<dbReference type="GO" id="GO:0006741">
    <property type="term" value="P:NADP biosynthetic process"/>
    <property type="evidence" value="ECO:0007669"/>
    <property type="project" value="UniProtKB-UniRule"/>
</dbReference>
<dbReference type="FunFam" id="2.60.200.30:FF:000009">
    <property type="entry name" value="Poly(P)/ATP NAD kinase"/>
    <property type="match status" value="1"/>
</dbReference>
<dbReference type="Gene3D" id="3.40.50.10330">
    <property type="entry name" value="Probable inorganic polyphosphate/atp-NAD kinase, domain 1"/>
    <property type="match status" value="1"/>
</dbReference>
<dbReference type="Gene3D" id="2.60.200.30">
    <property type="entry name" value="Probable inorganic polyphosphate/atp-NAD kinase, domain 2"/>
    <property type="match status" value="1"/>
</dbReference>
<dbReference type="HAMAP" id="MF_00361">
    <property type="entry name" value="NAD_kinase"/>
    <property type="match status" value="1"/>
</dbReference>
<dbReference type="InterPro" id="IPR017438">
    <property type="entry name" value="ATP-NAD_kinase_N"/>
</dbReference>
<dbReference type="InterPro" id="IPR017437">
    <property type="entry name" value="ATP-NAD_kinase_PpnK-typ_C"/>
</dbReference>
<dbReference type="InterPro" id="IPR016064">
    <property type="entry name" value="NAD/diacylglycerol_kinase_sf"/>
</dbReference>
<dbReference type="InterPro" id="IPR002504">
    <property type="entry name" value="NADK"/>
</dbReference>
<dbReference type="NCBIfam" id="NF002306">
    <property type="entry name" value="PRK01231.1"/>
    <property type="match status" value="1"/>
</dbReference>
<dbReference type="PANTHER" id="PTHR20275">
    <property type="entry name" value="NAD KINASE"/>
    <property type="match status" value="1"/>
</dbReference>
<dbReference type="PANTHER" id="PTHR20275:SF0">
    <property type="entry name" value="NAD KINASE"/>
    <property type="match status" value="1"/>
</dbReference>
<dbReference type="Pfam" id="PF01513">
    <property type="entry name" value="NAD_kinase"/>
    <property type="match status" value="1"/>
</dbReference>
<dbReference type="Pfam" id="PF20143">
    <property type="entry name" value="NAD_kinase_C"/>
    <property type="match status" value="1"/>
</dbReference>
<dbReference type="SUPFAM" id="SSF111331">
    <property type="entry name" value="NAD kinase/diacylglycerol kinase-like"/>
    <property type="match status" value="1"/>
</dbReference>
<protein>
    <recommendedName>
        <fullName evidence="1">NAD kinase</fullName>
        <ecNumber evidence="1">2.7.1.23</ecNumber>
    </recommendedName>
    <alternativeName>
        <fullName evidence="1">ATP-dependent NAD kinase</fullName>
    </alternativeName>
</protein>
<keyword id="KW-0067">ATP-binding</keyword>
<keyword id="KW-0963">Cytoplasm</keyword>
<keyword id="KW-0418">Kinase</keyword>
<keyword id="KW-0520">NAD</keyword>
<keyword id="KW-0521">NADP</keyword>
<keyword id="KW-0547">Nucleotide-binding</keyword>
<keyword id="KW-1185">Reference proteome</keyword>
<keyword id="KW-0808">Transferase</keyword>
<gene>
    <name evidence="1" type="primary">nadK</name>
    <name type="ordered locus">Csal_1307</name>
</gene>
<evidence type="ECO:0000255" key="1">
    <source>
        <dbReference type="HAMAP-Rule" id="MF_00361"/>
    </source>
</evidence>
<accession>Q1QXZ6</accession>
<organism>
    <name type="scientific">Chromohalobacter salexigens (strain ATCC BAA-138 / DSM 3043 / CIP 106854 / NCIMB 13768 / 1H11)</name>
    <dbReference type="NCBI Taxonomy" id="290398"/>
    <lineage>
        <taxon>Bacteria</taxon>
        <taxon>Pseudomonadati</taxon>
        <taxon>Pseudomonadota</taxon>
        <taxon>Gammaproteobacteria</taxon>
        <taxon>Oceanospirillales</taxon>
        <taxon>Halomonadaceae</taxon>
        <taxon>Chromohalobacter</taxon>
    </lineage>
</organism>
<proteinExistence type="inferred from homology"/>
<name>NADK_CHRSD</name>